<sequence length="171" mass="19470">MAKYTEEQLYEIKEEAYTPQPDVLDAFNKMVDHVKEHAAAEFEKHKNLKWSNGDTYIDENGNERPYHHMNKRRGSRSGNKPNLRKKSTDGIKVDDDGWATLTKPKKSFGAEDGVEERNKFRESVKDIKVKPNNKNLGSSKAVDPRDAIAEKHTNTFNAFEALGDGDDSDDE</sequence>
<evidence type="ECO:0000250" key="1"/>
<evidence type="ECO:0000256" key="2">
    <source>
        <dbReference type="SAM" id="MobiDB-lite"/>
    </source>
</evidence>
<evidence type="ECO:0000305" key="3"/>
<feature type="chain" id="PRO_0000330086" description="Cap-associated protein CAF20">
    <location>
        <begin position="1"/>
        <end position="171"/>
    </location>
</feature>
<feature type="region of interest" description="Disordered" evidence="2">
    <location>
        <begin position="49"/>
        <end position="144"/>
    </location>
</feature>
<feature type="compositionally biased region" description="Basic and acidic residues" evidence="2">
    <location>
        <begin position="86"/>
        <end position="95"/>
    </location>
</feature>
<feature type="compositionally biased region" description="Basic and acidic residues" evidence="2">
    <location>
        <begin position="115"/>
        <end position="129"/>
    </location>
</feature>
<accession>Q6BLT5</accession>
<protein>
    <recommendedName>
        <fullName>Cap-associated protein CAF20</fullName>
    </recommendedName>
</protein>
<comment type="function">
    <text evidence="1">Acts as an inhibitor of cap-dependent translation. Competes with eIF4G1 and EAP1 for binding to eIF4E and interferes with the formation of the eIF4F complex, inhibiting translation and stabilizing mRNA (By similarity).</text>
</comment>
<comment type="subcellular location">
    <subcellularLocation>
        <location evidence="1">Cytoplasm</location>
    </subcellularLocation>
</comment>
<comment type="similarity">
    <text evidence="3">Belongs to the CAF20 family.</text>
</comment>
<organism>
    <name type="scientific">Debaryomyces hansenii (strain ATCC 36239 / CBS 767 / BCRC 21394 / JCM 1990 / NBRC 0083 / IGC 2968)</name>
    <name type="common">Yeast</name>
    <name type="synonym">Torulaspora hansenii</name>
    <dbReference type="NCBI Taxonomy" id="284592"/>
    <lineage>
        <taxon>Eukaryota</taxon>
        <taxon>Fungi</taxon>
        <taxon>Dikarya</taxon>
        <taxon>Ascomycota</taxon>
        <taxon>Saccharomycotina</taxon>
        <taxon>Pichiomycetes</taxon>
        <taxon>Debaryomycetaceae</taxon>
        <taxon>Debaryomyces</taxon>
    </lineage>
</organism>
<keyword id="KW-0963">Cytoplasm</keyword>
<keyword id="KW-0396">Initiation factor</keyword>
<keyword id="KW-0597">Phosphoprotein</keyword>
<keyword id="KW-0648">Protein biosynthesis</keyword>
<keyword id="KW-0652">Protein synthesis inhibitor</keyword>
<keyword id="KW-1185">Reference proteome</keyword>
<keyword id="KW-0810">Translation regulation</keyword>
<dbReference type="EMBL" id="CR382138">
    <property type="protein sequence ID" value="CAG89181.1"/>
    <property type="molecule type" value="Genomic_DNA"/>
</dbReference>
<dbReference type="RefSeq" id="XP_460836.1">
    <property type="nucleotide sequence ID" value="XM_460836.1"/>
</dbReference>
<dbReference type="SMR" id="Q6BLT5"/>
<dbReference type="FunCoup" id="Q6BLT5">
    <property type="interactions" value="383"/>
</dbReference>
<dbReference type="STRING" id="284592.Q6BLT5"/>
<dbReference type="GeneID" id="2903571"/>
<dbReference type="KEGG" id="dha:DEHA2F10868g"/>
<dbReference type="VEuPathDB" id="FungiDB:DEHA2F10868g"/>
<dbReference type="eggNOG" id="ENOG502S2E7">
    <property type="taxonomic scope" value="Eukaryota"/>
</dbReference>
<dbReference type="HOGENOM" id="CLU_128343_0_0_1"/>
<dbReference type="InParanoid" id="Q6BLT5"/>
<dbReference type="OMA" id="NGNERPY"/>
<dbReference type="OrthoDB" id="3995390at2759"/>
<dbReference type="Proteomes" id="UP000000599">
    <property type="component" value="Chromosome F"/>
</dbReference>
<dbReference type="GO" id="GO:0005737">
    <property type="term" value="C:cytoplasm"/>
    <property type="evidence" value="ECO:0007669"/>
    <property type="project" value="UniProtKB-SubCell"/>
</dbReference>
<dbReference type="GO" id="GO:0008190">
    <property type="term" value="F:eukaryotic initiation factor 4E binding"/>
    <property type="evidence" value="ECO:0007669"/>
    <property type="project" value="InterPro"/>
</dbReference>
<dbReference type="GO" id="GO:0003743">
    <property type="term" value="F:translation initiation factor activity"/>
    <property type="evidence" value="ECO:0007669"/>
    <property type="project" value="UniProtKB-KW"/>
</dbReference>
<dbReference type="GO" id="GO:0017148">
    <property type="term" value="P:negative regulation of translation"/>
    <property type="evidence" value="ECO:0007669"/>
    <property type="project" value="UniProtKB-KW"/>
</dbReference>
<dbReference type="InterPro" id="IPR031456">
    <property type="entry name" value="Caf20"/>
</dbReference>
<dbReference type="Pfam" id="PF17052">
    <property type="entry name" value="CAF20"/>
    <property type="match status" value="1"/>
</dbReference>
<reference key="1">
    <citation type="journal article" date="2004" name="Nature">
        <title>Genome evolution in yeasts.</title>
        <authorList>
            <person name="Dujon B."/>
            <person name="Sherman D."/>
            <person name="Fischer G."/>
            <person name="Durrens P."/>
            <person name="Casaregola S."/>
            <person name="Lafontaine I."/>
            <person name="de Montigny J."/>
            <person name="Marck C."/>
            <person name="Neuveglise C."/>
            <person name="Talla E."/>
            <person name="Goffard N."/>
            <person name="Frangeul L."/>
            <person name="Aigle M."/>
            <person name="Anthouard V."/>
            <person name="Babour A."/>
            <person name="Barbe V."/>
            <person name="Barnay S."/>
            <person name="Blanchin S."/>
            <person name="Beckerich J.-M."/>
            <person name="Beyne E."/>
            <person name="Bleykasten C."/>
            <person name="Boisrame A."/>
            <person name="Boyer J."/>
            <person name="Cattolico L."/>
            <person name="Confanioleri F."/>
            <person name="de Daruvar A."/>
            <person name="Despons L."/>
            <person name="Fabre E."/>
            <person name="Fairhead C."/>
            <person name="Ferry-Dumazet H."/>
            <person name="Groppi A."/>
            <person name="Hantraye F."/>
            <person name="Hennequin C."/>
            <person name="Jauniaux N."/>
            <person name="Joyet P."/>
            <person name="Kachouri R."/>
            <person name="Kerrest A."/>
            <person name="Koszul R."/>
            <person name="Lemaire M."/>
            <person name="Lesur I."/>
            <person name="Ma L."/>
            <person name="Muller H."/>
            <person name="Nicaud J.-M."/>
            <person name="Nikolski M."/>
            <person name="Oztas S."/>
            <person name="Ozier-Kalogeropoulos O."/>
            <person name="Pellenz S."/>
            <person name="Potier S."/>
            <person name="Richard G.-F."/>
            <person name="Straub M.-L."/>
            <person name="Suleau A."/>
            <person name="Swennen D."/>
            <person name="Tekaia F."/>
            <person name="Wesolowski-Louvel M."/>
            <person name="Westhof E."/>
            <person name="Wirth B."/>
            <person name="Zeniou-Meyer M."/>
            <person name="Zivanovic Y."/>
            <person name="Bolotin-Fukuhara M."/>
            <person name="Thierry A."/>
            <person name="Bouchier C."/>
            <person name="Caudron B."/>
            <person name="Scarpelli C."/>
            <person name="Gaillardin C."/>
            <person name="Weissenbach J."/>
            <person name="Wincker P."/>
            <person name="Souciet J.-L."/>
        </authorList>
    </citation>
    <scope>NUCLEOTIDE SEQUENCE [LARGE SCALE GENOMIC DNA]</scope>
    <source>
        <strain>ATCC 36239 / CBS 767 / BCRC 21394 / JCM 1990 / NBRC 0083 / IGC 2968</strain>
    </source>
</reference>
<name>CAF20_DEBHA</name>
<proteinExistence type="inferred from homology"/>
<gene>
    <name type="primary">CAF20</name>
    <name type="ordered locus">DEHA2F10868g</name>
</gene>